<feature type="chain" id="PRO_0000335152" description="DNA mismatch repair protein MutS">
    <location>
        <begin position="1"/>
        <end position="823"/>
    </location>
</feature>
<feature type="binding site" evidence="1">
    <location>
        <begin position="605"/>
        <end position="612"/>
    </location>
    <ligand>
        <name>ATP</name>
        <dbReference type="ChEBI" id="CHEBI:30616"/>
    </ligand>
</feature>
<organism>
    <name type="scientific">Fervidobacterium nodosum (strain ATCC 35602 / DSM 5306 / Rt17-B1)</name>
    <dbReference type="NCBI Taxonomy" id="381764"/>
    <lineage>
        <taxon>Bacteria</taxon>
        <taxon>Thermotogati</taxon>
        <taxon>Thermotogota</taxon>
        <taxon>Thermotogae</taxon>
        <taxon>Thermotogales</taxon>
        <taxon>Fervidobacteriaceae</taxon>
        <taxon>Fervidobacterium</taxon>
    </lineage>
</organism>
<name>MUTS_FERNB</name>
<sequence length="823" mass="94259">MEKSLFDTKNLKITPMMKQYLDIKDKYKDSILLFRLGDFYEAFFDDALTVSKILNIVLTKRQDAPMAGIPYHALDNYLKKLVDAGYKVAICEQMEDPALAKGIVKREVTRVITPGTIIEDELLTTENNYMMSLYETKDGKISCILTDSSTGEVIIKQMESIDEISDFLQTHRVSQIICPENFYDKIVNIARVLGIFVDKLDDWYYENDIQTIKEAYGLVSIEHFELGEASKPLCATIKYINYTLNRQAKLKVPKTLDESKYMTLDSTTVENLSLIPGDKGKNLYDVLNKTNTPMGGRLLKWVILHPLKDRNEIEKRLWYVEAFYEDPLLTNEIREYLNGVYDLERIINRLEYDSAKPKDLISLKTTLEVVEPIKEALSTNEKLIQLAQMLPDLSQIKVKIENTLLEEFEGELGEGKIIKEGVSKELDEYRELLYHSNEKLKEFEERERAKTGIQKLKVSFNNVFGYYIEIPKGQVKFAPQEYTRIQTLVNAERYTTTELKEFEQKILAAKEKVEILEKTIFKQICDELKGYTQDLRKLAEMLSWIDVYSNFAYVSKLYSYSKPEISDSEFKVLNGRHPVVERFVDEFVPNDIYMSDELRMYILTGPNMSGKSTYIRQVGLIALMTQIGCFVPAQYAKVPVFDRIFTRMGARDDISTGKSTFLTEMNEVALILSKATQKSLVLLDEVGRGTSTFDGISIAWAMSEYIYNEIKCKTIFATHFTELTELSEGYSGIKNLTVDVKETPDGVVFLHKVVEGVADRSYGIEVAAIAGLPESIIERAKEILNIIVEKSDLEKKVGVLKEGQMKKIKATKKSVPEGQMKLF</sequence>
<comment type="function">
    <text evidence="1">This protein is involved in the repair of mismatches in DNA. It is possible that it carries out the mismatch recognition step. This protein has a weak ATPase activity.</text>
</comment>
<comment type="similarity">
    <text evidence="1">Belongs to the DNA mismatch repair MutS family.</text>
</comment>
<protein>
    <recommendedName>
        <fullName evidence="1">DNA mismatch repair protein MutS</fullName>
    </recommendedName>
</protein>
<evidence type="ECO:0000255" key="1">
    <source>
        <dbReference type="HAMAP-Rule" id="MF_00096"/>
    </source>
</evidence>
<keyword id="KW-0067">ATP-binding</keyword>
<keyword id="KW-0227">DNA damage</keyword>
<keyword id="KW-0234">DNA repair</keyword>
<keyword id="KW-0238">DNA-binding</keyword>
<keyword id="KW-0547">Nucleotide-binding</keyword>
<keyword id="KW-1185">Reference proteome</keyword>
<reference key="1">
    <citation type="submission" date="2007-07" db="EMBL/GenBank/DDBJ databases">
        <title>Complete sequence of Fervidobacterium nodosum Rt17-B1.</title>
        <authorList>
            <consortium name="US DOE Joint Genome Institute"/>
            <person name="Copeland A."/>
            <person name="Lucas S."/>
            <person name="Lapidus A."/>
            <person name="Barry K."/>
            <person name="Glavina del Rio T."/>
            <person name="Dalin E."/>
            <person name="Tice H."/>
            <person name="Pitluck S."/>
            <person name="Saunders E."/>
            <person name="Brettin T."/>
            <person name="Bruce D."/>
            <person name="Detter J.C."/>
            <person name="Han C."/>
            <person name="Schmutz J."/>
            <person name="Larimer F."/>
            <person name="Land M."/>
            <person name="Hauser L."/>
            <person name="Kyrpides N."/>
            <person name="Mikhailova N."/>
            <person name="Nelson K."/>
            <person name="Gogarten J.P."/>
            <person name="Noll K."/>
            <person name="Richardson P."/>
        </authorList>
    </citation>
    <scope>NUCLEOTIDE SEQUENCE [LARGE SCALE GENOMIC DNA]</scope>
    <source>
        <strain>ATCC 35602 / DSM 5306 / Rt17-B1</strain>
    </source>
</reference>
<gene>
    <name evidence="1" type="primary">mutS</name>
    <name type="ordered locus">Fnod_1250</name>
</gene>
<accession>A7HMG4</accession>
<proteinExistence type="inferred from homology"/>
<dbReference type="EMBL" id="CP000771">
    <property type="protein sequence ID" value="ABS61097.1"/>
    <property type="molecule type" value="Genomic_DNA"/>
</dbReference>
<dbReference type="RefSeq" id="WP_011994407.1">
    <property type="nucleotide sequence ID" value="NC_009718.1"/>
</dbReference>
<dbReference type="SMR" id="A7HMG4"/>
<dbReference type="STRING" id="381764.Fnod_1250"/>
<dbReference type="KEGG" id="fno:Fnod_1250"/>
<dbReference type="eggNOG" id="COG0249">
    <property type="taxonomic scope" value="Bacteria"/>
</dbReference>
<dbReference type="HOGENOM" id="CLU_002472_1_3_0"/>
<dbReference type="OrthoDB" id="9802448at2"/>
<dbReference type="Proteomes" id="UP000002415">
    <property type="component" value="Chromosome"/>
</dbReference>
<dbReference type="GO" id="GO:0005829">
    <property type="term" value="C:cytosol"/>
    <property type="evidence" value="ECO:0007669"/>
    <property type="project" value="TreeGrafter"/>
</dbReference>
<dbReference type="GO" id="GO:0005524">
    <property type="term" value="F:ATP binding"/>
    <property type="evidence" value="ECO:0007669"/>
    <property type="project" value="UniProtKB-UniRule"/>
</dbReference>
<dbReference type="GO" id="GO:0140664">
    <property type="term" value="F:ATP-dependent DNA damage sensor activity"/>
    <property type="evidence" value="ECO:0007669"/>
    <property type="project" value="InterPro"/>
</dbReference>
<dbReference type="GO" id="GO:0003684">
    <property type="term" value="F:damaged DNA binding"/>
    <property type="evidence" value="ECO:0007669"/>
    <property type="project" value="UniProtKB-UniRule"/>
</dbReference>
<dbReference type="GO" id="GO:0030983">
    <property type="term" value="F:mismatched DNA binding"/>
    <property type="evidence" value="ECO:0007669"/>
    <property type="project" value="InterPro"/>
</dbReference>
<dbReference type="GO" id="GO:0006298">
    <property type="term" value="P:mismatch repair"/>
    <property type="evidence" value="ECO:0007669"/>
    <property type="project" value="UniProtKB-UniRule"/>
</dbReference>
<dbReference type="CDD" id="cd03284">
    <property type="entry name" value="ABC_MutS1"/>
    <property type="match status" value="1"/>
</dbReference>
<dbReference type="FunFam" id="3.40.1170.10:FF:000001">
    <property type="entry name" value="DNA mismatch repair protein MutS"/>
    <property type="match status" value="1"/>
</dbReference>
<dbReference type="FunFam" id="3.40.50.300:FF:000870">
    <property type="entry name" value="MutS protein homolog 4"/>
    <property type="match status" value="1"/>
</dbReference>
<dbReference type="Gene3D" id="1.10.1420.10">
    <property type="match status" value="2"/>
</dbReference>
<dbReference type="Gene3D" id="3.40.1170.10">
    <property type="entry name" value="DNA repair protein MutS, domain I"/>
    <property type="match status" value="1"/>
</dbReference>
<dbReference type="Gene3D" id="3.30.420.110">
    <property type="entry name" value="MutS, connector domain"/>
    <property type="match status" value="1"/>
</dbReference>
<dbReference type="Gene3D" id="3.40.50.300">
    <property type="entry name" value="P-loop containing nucleotide triphosphate hydrolases"/>
    <property type="match status" value="1"/>
</dbReference>
<dbReference type="HAMAP" id="MF_00096">
    <property type="entry name" value="MutS"/>
    <property type="match status" value="1"/>
</dbReference>
<dbReference type="InterPro" id="IPR005748">
    <property type="entry name" value="DNA_mismatch_repair_MutS"/>
</dbReference>
<dbReference type="InterPro" id="IPR007695">
    <property type="entry name" value="DNA_mismatch_repair_MutS-lik_N"/>
</dbReference>
<dbReference type="InterPro" id="IPR017261">
    <property type="entry name" value="DNA_mismatch_repair_MutS/MSH"/>
</dbReference>
<dbReference type="InterPro" id="IPR000432">
    <property type="entry name" value="DNA_mismatch_repair_MutS_C"/>
</dbReference>
<dbReference type="InterPro" id="IPR007861">
    <property type="entry name" value="DNA_mismatch_repair_MutS_clamp"/>
</dbReference>
<dbReference type="InterPro" id="IPR007696">
    <property type="entry name" value="DNA_mismatch_repair_MutS_core"/>
</dbReference>
<dbReference type="InterPro" id="IPR016151">
    <property type="entry name" value="DNA_mismatch_repair_MutS_N"/>
</dbReference>
<dbReference type="InterPro" id="IPR036187">
    <property type="entry name" value="DNA_mismatch_repair_MutS_sf"/>
</dbReference>
<dbReference type="InterPro" id="IPR007860">
    <property type="entry name" value="DNA_mmatch_repair_MutS_con_dom"/>
</dbReference>
<dbReference type="InterPro" id="IPR045076">
    <property type="entry name" value="MutS"/>
</dbReference>
<dbReference type="InterPro" id="IPR036678">
    <property type="entry name" value="MutS_con_dom_sf"/>
</dbReference>
<dbReference type="InterPro" id="IPR027417">
    <property type="entry name" value="P-loop_NTPase"/>
</dbReference>
<dbReference type="NCBIfam" id="TIGR01070">
    <property type="entry name" value="mutS1"/>
    <property type="match status" value="1"/>
</dbReference>
<dbReference type="NCBIfam" id="NF003810">
    <property type="entry name" value="PRK05399.1"/>
    <property type="match status" value="1"/>
</dbReference>
<dbReference type="PANTHER" id="PTHR11361:SF34">
    <property type="entry name" value="DNA MISMATCH REPAIR PROTEIN MSH1, MITOCHONDRIAL"/>
    <property type="match status" value="1"/>
</dbReference>
<dbReference type="PANTHER" id="PTHR11361">
    <property type="entry name" value="DNA MISMATCH REPAIR PROTEIN MUTS FAMILY MEMBER"/>
    <property type="match status" value="1"/>
</dbReference>
<dbReference type="Pfam" id="PF01624">
    <property type="entry name" value="MutS_I"/>
    <property type="match status" value="1"/>
</dbReference>
<dbReference type="Pfam" id="PF05188">
    <property type="entry name" value="MutS_II"/>
    <property type="match status" value="1"/>
</dbReference>
<dbReference type="Pfam" id="PF05192">
    <property type="entry name" value="MutS_III"/>
    <property type="match status" value="1"/>
</dbReference>
<dbReference type="Pfam" id="PF05190">
    <property type="entry name" value="MutS_IV"/>
    <property type="match status" value="1"/>
</dbReference>
<dbReference type="Pfam" id="PF00488">
    <property type="entry name" value="MutS_V"/>
    <property type="match status" value="1"/>
</dbReference>
<dbReference type="PIRSF" id="PIRSF037677">
    <property type="entry name" value="DNA_mis_repair_Msh6"/>
    <property type="match status" value="1"/>
</dbReference>
<dbReference type="SMART" id="SM00534">
    <property type="entry name" value="MUTSac"/>
    <property type="match status" value="1"/>
</dbReference>
<dbReference type="SMART" id="SM00533">
    <property type="entry name" value="MUTSd"/>
    <property type="match status" value="1"/>
</dbReference>
<dbReference type="SUPFAM" id="SSF55271">
    <property type="entry name" value="DNA repair protein MutS, domain I"/>
    <property type="match status" value="1"/>
</dbReference>
<dbReference type="SUPFAM" id="SSF53150">
    <property type="entry name" value="DNA repair protein MutS, domain II"/>
    <property type="match status" value="1"/>
</dbReference>
<dbReference type="SUPFAM" id="SSF48334">
    <property type="entry name" value="DNA repair protein MutS, domain III"/>
    <property type="match status" value="1"/>
</dbReference>
<dbReference type="SUPFAM" id="SSF52540">
    <property type="entry name" value="P-loop containing nucleoside triphosphate hydrolases"/>
    <property type="match status" value="1"/>
</dbReference>
<dbReference type="PROSITE" id="PS00486">
    <property type="entry name" value="DNA_MISMATCH_REPAIR_2"/>
    <property type="match status" value="1"/>
</dbReference>